<name>RIMO_PSEE4</name>
<proteinExistence type="inferred from homology"/>
<dbReference type="EC" id="2.8.4.4" evidence="1"/>
<dbReference type="EMBL" id="CT573326">
    <property type="protein sequence ID" value="CAK16804.1"/>
    <property type="molecule type" value="Genomic_DNA"/>
</dbReference>
<dbReference type="RefSeq" id="WP_011535175.1">
    <property type="nucleotide sequence ID" value="NC_008027.1"/>
</dbReference>
<dbReference type="SMR" id="Q1I6D1"/>
<dbReference type="STRING" id="384676.PSEEN4113"/>
<dbReference type="GeneID" id="32807128"/>
<dbReference type="KEGG" id="pen:PSEEN4113"/>
<dbReference type="eggNOG" id="COG0621">
    <property type="taxonomic scope" value="Bacteria"/>
</dbReference>
<dbReference type="HOGENOM" id="CLU_018697_0_0_6"/>
<dbReference type="OrthoDB" id="9805215at2"/>
<dbReference type="Proteomes" id="UP000000658">
    <property type="component" value="Chromosome"/>
</dbReference>
<dbReference type="GO" id="GO:0005829">
    <property type="term" value="C:cytosol"/>
    <property type="evidence" value="ECO:0007669"/>
    <property type="project" value="TreeGrafter"/>
</dbReference>
<dbReference type="GO" id="GO:0051539">
    <property type="term" value="F:4 iron, 4 sulfur cluster binding"/>
    <property type="evidence" value="ECO:0007669"/>
    <property type="project" value="UniProtKB-UniRule"/>
</dbReference>
<dbReference type="GO" id="GO:0035599">
    <property type="term" value="F:aspartic acid methylthiotransferase activity"/>
    <property type="evidence" value="ECO:0007669"/>
    <property type="project" value="TreeGrafter"/>
</dbReference>
<dbReference type="GO" id="GO:0046872">
    <property type="term" value="F:metal ion binding"/>
    <property type="evidence" value="ECO:0007669"/>
    <property type="project" value="UniProtKB-KW"/>
</dbReference>
<dbReference type="GO" id="GO:0103039">
    <property type="term" value="F:protein methylthiotransferase activity"/>
    <property type="evidence" value="ECO:0007669"/>
    <property type="project" value="UniProtKB-EC"/>
</dbReference>
<dbReference type="GO" id="GO:0006400">
    <property type="term" value="P:tRNA modification"/>
    <property type="evidence" value="ECO:0007669"/>
    <property type="project" value="InterPro"/>
</dbReference>
<dbReference type="CDD" id="cd01335">
    <property type="entry name" value="Radical_SAM"/>
    <property type="match status" value="1"/>
</dbReference>
<dbReference type="FunFam" id="2.40.50.140:FF:000060">
    <property type="entry name" value="Ribosomal protein S12 methylthiotransferase RimO"/>
    <property type="match status" value="1"/>
</dbReference>
<dbReference type="FunFam" id="3.40.50.12160:FF:000002">
    <property type="entry name" value="Ribosomal protein S12 methylthiotransferase RimO"/>
    <property type="match status" value="1"/>
</dbReference>
<dbReference type="FunFam" id="3.80.30.20:FF:000001">
    <property type="entry name" value="tRNA-2-methylthio-N(6)-dimethylallyladenosine synthase 2"/>
    <property type="match status" value="1"/>
</dbReference>
<dbReference type="Gene3D" id="3.40.50.12160">
    <property type="entry name" value="Methylthiotransferase, N-terminal domain"/>
    <property type="match status" value="1"/>
</dbReference>
<dbReference type="Gene3D" id="2.40.50.140">
    <property type="entry name" value="Nucleic acid-binding proteins"/>
    <property type="match status" value="1"/>
</dbReference>
<dbReference type="Gene3D" id="3.80.30.20">
    <property type="entry name" value="tm_1862 like domain"/>
    <property type="match status" value="1"/>
</dbReference>
<dbReference type="HAMAP" id="MF_01865">
    <property type="entry name" value="MTTase_RimO"/>
    <property type="match status" value="1"/>
</dbReference>
<dbReference type="InterPro" id="IPR006638">
    <property type="entry name" value="Elp3/MiaA/NifB-like_rSAM"/>
</dbReference>
<dbReference type="InterPro" id="IPR005839">
    <property type="entry name" value="Methylthiotransferase"/>
</dbReference>
<dbReference type="InterPro" id="IPR020612">
    <property type="entry name" value="Methylthiotransferase_CS"/>
</dbReference>
<dbReference type="InterPro" id="IPR013848">
    <property type="entry name" value="Methylthiotransferase_N"/>
</dbReference>
<dbReference type="InterPro" id="IPR038135">
    <property type="entry name" value="Methylthiotransferase_N_sf"/>
</dbReference>
<dbReference type="InterPro" id="IPR012340">
    <property type="entry name" value="NA-bd_OB-fold"/>
</dbReference>
<dbReference type="InterPro" id="IPR005840">
    <property type="entry name" value="Ribosomal_uS12_MeSTrfase_RimO"/>
</dbReference>
<dbReference type="InterPro" id="IPR007197">
    <property type="entry name" value="rSAM"/>
</dbReference>
<dbReference type="InterPro" id="IPR023404">
    <property type="entry name" value="rSAM_horseshoe"/>
</dbReference>
<dbReference type="InterPro" id="IPR002792">
    <property type="entry name" value="TRAM_dom"/>
</dbReference>
<dbReference type="NCBIfam" id="TIGR01125">
    <property type="entry name" value="30S ribosomal protein S12 methylthiotransferase RimO"/>
    <property type="match status" value="1"/>
</dbReference>
<dbReference type="NCBIfam" id="TIGR00089">
    <property type="entry name" value="MiaB/RimO family radical SAM methylthiotransferase"/>
    <property type="match status" value="1"/>
</dbReference>
<dbReference type="PANTHER" id="PTHR43837">
    <property type="entry name" value="RIBOSOMAL PROTEIN S12 METHYLTHIOTRANSFERASE RIMO"/>
    <property type="match status" value="1"/>
</dbReference>
<dbReference type="PANTHER" id="PTHR43837:SF1">
    <property type="entry name" value="RIBOSOMAL PROTEIN US12 METHYLTHIOTRANSFERASE RIMO"/>
    <property type="match status" value="1"/>
</dbReference>
<dbReference type="Pfam" id="PF04055">
    <property type="entry name" value="Radical_SAM"/>
    <property type="match status" value="1"/>
</dbReference>
<dbReference type="Pfam" id="PF18693">
    <property type="entry name" value="TRAM_2"/>
    <property type="match status" value="1"/>
</dbReference>
<dbReference type="Pfam" id="PF00919">
    <property type="entry name" value="UPF0004"/>
    <property type="match status" value="1"/>
</dbReference>
<dbReference type="SFLD" id="SFLDG01082">
    <property type="entry name" value="B12-binding_domain_containing"/>
    <property type="match status" value="1"/>
</dbReference>
<dbReference type="SFLD" id="SFLDS00029">
    <property type="entry name" value="Radical_SAM"/>
    <property type="match status" value="1"/>
</dbReference>
<dbReference type="SFLD" id="SFLDF00274">
    <property type="entry name" value="ribosomal_protein_S12_methylth"/>
    <property type="match status" value="1"/>
</dbReference>
<dbReference type="SMART" id="SM00729">
    <property type="entry name" value="Elp3"/>
    <property type="match status" value="1"/>
</dbReference>
<dbReference type="SUPFAM" id="SSF102114">
    <property type="entry name" value="Radical SAM enzymes"/>
    <property type="match status" value="1"/>
</dbReference>
<dbReference type="PROSITE" id="PS51449">
    <property type="entry name" value="MTTASE_N"/>
    <property type="match status" value="1"/>
</dbReference>
<dbReference type="PROSITE" id="PS01278">
    <property type="entry name" value="MTTASE_RADICAL"/>
    <property type="match status" value="1"/>
</dbReference>
<dbReference type="PROSITE" id="PS51918">
    <property type="entry name" value="RADICAL_SAM"/>
    <property type="match status" value="1"/>
</dbReference>
<dbReference type="PROSITE" id="PS50926">
    <property type="entry name" value="TRAM"/>
    <property type="match status" value="1"/>
</dbReference>
<keyword id="KW-0004">4Fe-4S</keyword>
<keyword id="KW-0963">Cytoplasm</keyword>
<keyword id="KW-0408">Iron</keyword>
<keyword id="KW-0411">Iron-sulfur</keyword>
<keyword id="KW-0479">Metal-binding</keyword>
<keyword id="KW-0949">S-adenosyl-L-methionine</keyword>
<keyword id="KW-0808">Transferase</keyword>
<gene>
    <name evidence="1" type="primary">rimO</name>
    <name type="ordered locus">PSEEN4113</name>
</gene>
<accession>Q1I6D1</accession>
<protein>
    <recommendedName>
        <fullName evidence="1">Ribosomal protein uS12 methylthiotransferase RimO</fullName>
        <shortName evidence="1">uS12 MTTase</shortName>
        <shortName evidence="1">uS12 methylthiotransferase</shortName>
        <ecNumber evidence="1">2.8.4.4</ecNumber>
    </recommendedName>
    <alternativeName>
        <fullName evidence="1">Ribosomal protein uS12 (aspartate-C(3))-methylthiotransferase</fullName>
    </alternativeName>
    <alternativeName>
        <fullName evidence="1">Ribosome maturation factor RimO</fullName>
    </alternativeName>
</protein>
<comment type="function">
    <text evidence="1">Catalyzes the methylthiolation of an aspartic acid residue of ribosomal protein uS12.</text>
</comment>
<comment type="catalytic activity">
    <reaction evidence="1">
        <text>L-aspartate(89)-[ribosomal protein uS12]-hydrogen + (sulfur carrier)-SH + AH2 + 2 S-adenosyl-L-methionine = 3-methylsulfanyl-L-aspartate(89)-[ribosomal protein uS12]-hydrogen + (sulfur carrier)-H + 5'-deoxyadenosine + L-methionine + A + S-adenosyl-L-homocysteine + 2 H(+)</text>
        <dbReference type="Rhea" id="RHEA:37087"/>
        <dbReference type="Rhea" id="RHEA-COMP:10460"/>
        <dbReference type="Rhea" id="RHEA-COMP:10461"/>
        <dbReference type="Rhea" id="RHEA-COMP:14737"/>
        <dbReference type="Rhea" id="RHEA-COMP:14739"/>
        <dbReference type="ChEBI" id="CHEBI:13193"/>
        <dbReference type="ChEBI" id="CHEBI:15378"/>
        <dbReference type="ChEBI" id="CHEBI:17319"/>
        <dbReference type="ChEBI" id="CHEBI:17499"/>
        <dbReference type="ChEBI" id="CHEBI:29917"/>
        <dbReference type="ChEBI" id="CHEBI:29961"/>
        <dbReference type="ChEBI" id="CHEBI:57844"/>
        <dbReference type="ChEBI" id="CHEBI:57856"/>
        <dbReference type="ChEBI" id="CHEBI:59789"/>
        <dbReference type="ChEBI" id="CHEBI:64428"/>
        <dbReference type="ChEBI" id="CHEBI:73599"/>
        <dbReference type="EC" id="2.8.4.4"/>
    </reaction>
</comment>
<comment type="cofactor">
    <cofactor evidence="1">
        <name>[4Fe-4S] cluster</name>
        <dbReference type="ChEBI" id="CHEBI:49883"/>
    </cofactor>
    <text evidence="1">Binds 2 [4Fe-4S] clusters. One cluster is coordinated with 3 cysteines and an exchangeable S-adenosyl-L-methionine.</text>
</comment>
<comment type="subcellular location">
    <subcellularLocation>
        <location evidence="1">Cytoplasm</location>
    </subcellularLocation>
</comment>
<comment type="similarity">
    <text evidence="1">Belongs to the methylthiotransferase family. RimO subfamily.</text>
</comment>
<sequence length="443" mass="49408">MSTTPATPKVGFVSLGCPKALVDSERILTQLRMEGYEVVPTYEDADVVVVNTCGFIDSAKAESLEVIGEAIKENGKVIVTGCMGVEEGSIRDVHPSVLSVTGPQQYEQVVNAVHEVVPPRQDHNPLIDLVPPQGVKLTPRHYAYLKISEGCNHSCSFCIIPSMRGKLVSRPVGEVLSEAERLVKAGVKEILVISQDTSAYGVDVKYKTDFWNGRPVKTRMLELCEALSSLGAWVRLHYVYPYPNVDDVIPLMAAGKILPYLDIPFQHASPKVLKSMKRPAFEDRTLARIKNWREQCPELVIRSTFIVGFPGETEEDFQYLLDWLTEAQLDRVGCFQYSPVEGAPANDLGLDEVPDDVKQERWDRFMAHQQAISAARLQQRIGKEIEVLIDEVEEQGSVGRSFFDAPEIDGSVFIDGDHGFKPGDKVRCRIVDADEYDMWAEPI</sequence>
<organism>
    <name type="scientific">Pseudomonas entomophila (strain L48)</name>
    <dbReference type="NCBI Taxonomy" id="384676"/>
    <lineage>
        <taxon>Bacteria</taxon>
        <taxon>Pseudomonadati</taxon>
        <taxon>Pseudomonadota</taxon>
        <taxon>Gammaproteobacteria</taxon>
        <taxon>Pseudomonadales</taxon>
        <taxon>Pseudomonadaceae</taxon>
        <taxon>Pseudomonas</taxon>
    </lineage>
</organism>
<evidence type="ECO:0000255" key="1">
    <source>
        <dbReference type="HAMAP-Rule" id="MF_01865"/>
    </source>
</evidence>
<evidence type="ECO:0000255" key="2">
    <source>
        <dbReference type="PROSITE-ProRule" id="PRU01266"/>
    </source>
</evidence>
<reference key="1">
    <citation type="journal article" date="2006" name="Nat. Biotechnol.">
        <title>Complete genome sequence of the entomopathogenic and metabolically versatile soil bacterium Pseudomonas entomophila.</title>
        <authorList>
            <person name="Vodovar N."/>
            <person name="Vallenet D."/>
            <person name="Cruveiller S."/>
            <person name="Rouy Z."/>
            <person name="Barbe V."/>
            <person name="Acosta C."/>
            <person name="Cattolico L."/>
            <person name="Jubin C."/>
            <person name="Lajus A."/>
            <person name="Segurens B."/>
            <person name="Vacherie B."/>
            <person name="Wincker P."/>
            <person name="Weissenbach J."/>
            <person name="Lemaitre B."/>
            <person name="Medigue C."/>
            <person name="Boccard F."/>
        </authorList>
    </citation>
    <scope>NUCLEOTIDE SEQUENCE [LARGE SCALE GENOMIC DNA]</scope>
    <source>
        <strain>L48</strain>
    </source>
</reference>
<feature type="chain" id="PRO_0000374944" description="Ribosomal protein uS12 methylthiotransferase RimO">
    <location>
        <begin position="1"/>
        <end position="443"/>
    </location>
</feature>
<feature type="domain" description="MTTase N-terminal" evidence="1">
    <location>
        <begin position="8"/>
        <end position="118"/>
    </location>
</feature>
<feature type="domain" description="Radical SAM core" evidence="2">
    <location>
        <begin position="137"/>
        <end position="375"/>
    </location>
</feature>
<feature type="domain" description="TRAM" evidence="1">
    <location>
        <begin position="378"/>
        <end position="443"/>
    </location>
</feature>
<feature type="binding site" evidence="1">
    <location>
        <position position="17"/>
    </location>
    <ligand>
        <name>[4Fe-4S] cluster</name>
        <dbReference type="ChEBI" id="CHEBI:49883"/>
        <label>1</label>
    </ligand>
</feature>
<feature type="binding site" evidence="1">
    <location>
        <position position="53"/>
    </location>
    <ligand>
        <name>[4Fe-4S] cluster</name>
        <dbReference type="ChEBI" id="CHEBI:49883"/>
        <label>1</label>
    </ligand>
</feature>
<feature type="binding site" evidence="1">
    <location>
        <position position="82"/>
    </location>
    <ligand>
        <name>[4Fe-4S] cluster</name>
        <dbReference type="ChEBI" id="CHEBI:49883"/>
        <label>1</label>
    </ligand>
</feature>
<feature type="binding site" evidence="1">
    <location>
        <position position="151"/>
    </location>
    <ligand>
        <name>[4Fe-4S] cluster</name>
        <dbReference type="ChEBI" id="CHEBI:49883"/>
        <label>2</label>
        <note>4Fe-4S-S-AdoMet</note>
    </ligand>
</feature>
<feature type="binding site" evidence="1">
    <location>
        <position position="155"/>
    </location>
    <ligand>
        <name>[4Fe-4S] cluster</name>
        <dbReference type="ChEBI" id="CHEBI:49883"/>
        <label>2</label>
        <note>4Fe-4S-S-AdoMet</note>
    </ligand>
</feature>
<feature type="binding site" evidence="1">
    <location>
        <position position="158"/>
    </location>
    <ligand>
        <name>[4Fe-4S] cluster</name>
        <dbReference type="ChEBI" id="CHEBI:49883"/>
        <label>2</label>
        <note>4Fe-4S-S-AdoMet</note>
    </ligand>
</feature>